<protein>
    <recommendedName>
        <fullName>Periviscerokinin-1</fullName>
        <shortName>BlaDu-PVK-1</shortName>
        <shortName>PVK-1</shortName>
    </recommendedName>
</protein>
<comment type="function">
    <text evidence="1">Mediates visceral muscle contractile activity (myotropic activity).</text>
</comment>
<comment type="subcellular location">
    <subcellularLocation>
        <location>Secreted</location>
    </subcellularLocation>
</comment>
<comment type="mass spectrometry"/>
<comment type="similarity">
    <text evidence="3">Belongs to the periviscerokinin family.</text>
</comment>
<evidence type="ECO:0000269" key="1">
    <source>
    </source>
</evidence>
<evidence type="ECO:0000269" key="2">
    <source>
    </source>
</evidence>
<evidence type="ECO:0000305" key="3"/>
<name>PVK1_BLADU</name>
<feature type="peptide" id="PRO_0000044241" description="Periviscerokinin-1">
    <location>
        <begin position="1"/>
        <end position="11"/>
    </location>
</feature>
<feature type="modified residue" description="Threonine amide" evidence="1 2">
    <location>
        <position position="11"/>
    </location>
</feature>
<reference key="1">
    <citation type="journal article" date="2000" name="Eur. J. Biochem.">
        <title>Identification of novel periviscerokinins from single neurohaemal release sites in insects. MS/MS fragmentation complemented by Edman degradation.</title>
        <authorList>
            <person name="Predel R."/>
            <person name="Kellner R."/>
            <person name="Baggerman G."/>
            <person name="Steinmetzer T."/>
            <person name="Schoofs L."/>
        </authorList>
    </citation>
    <scope>PROTEIN SEQUENCE</scope>
    <scope>FUNCTION</scope>
    <scope>MASS SPECTROMETRY</scope>
    <scope>AMIDATION AT THR-11</scope>
    <source>
        <tissue>Abdominal perisympathetic organs</tissue>
    </source>
</reference>
<reference key="2">
    <citation type="journal article" date="2009" name="BMC Evol. Biol.">
        <title>A proteomic approach for studying insect phylogeny: CAPA peptides of ancient insect taxa (Dictyoptera, Blattoptera) as a test case.</title>
        <authorList>
            <person name="Roth S."/>
            <person name="Fromm B."/>
            <person name="Gaede G."/>
            <person name="Predel R."/>
        </authorList>
    </citation>
    <scope>PROTEIN SEQUENCE</scope>
    <scope>AMIDATION AT THR-11</scope>
    <source>
        <tissue>Abdominal perisympathetic organs</tissue>
    </source>
</reference>
<proteinExistence type="evidence at protein level"/>
<sequence>GSSGLIPFGRT</sequence>
<keyword id="KW-0027">Amidation</keyword>
<keyword id="KW-0903">Direct protein sequencing</keyword>
<keyword id="KW-0527">Neuropeptide</keyword>
<keyword id="KW-0964">Secreted</keyword>
<organism>
    <name type="scientific">Blaptica dubia</name>
    <name type="common">Argentinian wood cockroach</name>
    <dbReference type="NCBI Taxonomy" id="132935"/>
    <lineage>
        <taxon>Eukaryota</taxon>
        <taxon>Metazoa</taxon>
        <taxon>Ecdysozoa</taxon>
        <taxon>Arthropoda</taxon>
        <taxon>Hexapoda</taxon>
        <taxon>Insecta</taxon>
        <taxon>Pterygota</taxon>
        <taxon>Neoptera</taxon>
        <taxon>Polyneoptera</taxon>
        <taxon>Dictyoptera</taxon>
        <taxon>Blattodea</taxon>
        <taxon>Blaberoidea</taxon>
        <taxon>Blaberidae</taxon>
        <taxon>Blaberinae</taxon>
        <taxon>Blaptica</taxon>
    </lineage>
</organism>
<accession>P83924</accession>
<accession>P82698</accession>
<dbReference type="GO" id="GO:0005576">
    <property type="term" value="C:extracellular region"/>
    <property type="evidence" value="ECO:0007669"/>
    <property type="project" value="UniProtKB-SubCell"/>
</dbReference>
<dbReference type="GO" id="GO:0007218">
    <property type="term" value="P:neuropeptide signaling pathway"/>
    <property type="evidence" value="ECO:0007669"/>
    <property type="project" value="UniProtKB-KW"/>
</dbReference>
<dbReference type="InterPro" id="IPR013231">
    <property type="entry name" value="Periviscerokinin"/>
</dbReference>
<dbReference type="Pfam" id="PF08259">
    <property type="entry name" value="Periviscerokin"/>
    <property type="match status" value="1"/>
</dbReference>